<organism>
    <name type="scientific">Arabidopsis thaliana</name>
    <name type="common">Mouse-ear cress</name>
    <dbReference type="NCBI Taxonomy" id="3702"/>
    <lineage>
        <taxon>Eukaryota</taxon>
        <taxon>Viridiplantae</taxon>
        <taxon>Streptophyta</taxon>
        <taxon>Embryophyta</taxon>
        <taxon>Tracheophyta</taxon>
        <taxon>Spermatophyta</taxon>
        <taxon>Magnoliopsida</taxon>
        <taxon>eudicotyledons</taxon>
        <taxon>Gunneridae</taxon>
        <taxon>Pentapetalae</taxon>
        <taxon>rosids</taxon>
        <taxon>malvids</taxon>
        <taxon>Brassicales</taxon>
        <taxon>Brassicaceae</taxon>
        <taxon>Camelineae</taxon>
        <taxon>Arabidopsis</taxon>
    </lineage>
</organism>
<protein>
    <recommendedName>
        <fullName evidence="6">Protein indeterminate-domain 7</fullName>
    </recommendedName>
</protein>
<comment type="function">
    <text evidence="7">Probable transcription factor.</text>
</comment>
<comment type="subcellular location">
    <subcellularLocation>
        <location evidence="4">Nucleus</location>
    </subcellularLocation>
</comment>
<comment type="sequence caution" evidence="7">
    <conflict type="erroneous initiation">
        <sequence resource="EMBL-CDS" id="AAG50836"/>
    </conflict>
    <text>Truncated N-terminus.</text>
</comment>
<name>IDD7_ARATH</name>
<keyword id="KW-0238">DNA-binding</keyword>
<keyword id="KW-0479">Metal-binding</keyword>
<keyword id="KW-0539">Nucleus</keyword>
<keyword id="KW-0597">Phosphoprotein</keyword>
<keyword id="KW-1185">Reference proteome</keyword>
<keyword id="KW-0677">Repeat</keyword>
<keyword id="KW-0804">Transcription</keyword>
<keyword id="KW-0805">Transcription regulation</keyword>
<keyword id="KW-0862">Zinc</keyword>
<keyword id="KW-0863">Zinc-finger</keyword>
<gene>
    <name evidence="6" type="primary">IDD7</name>
    <name evidence="8" type="ordered locus">At1g55110</name>
    <name evidence="9" type="ORF">T7N22.5</name>
</gene>
<reference key="1">
    <citation type="journal article" date="2000" name="Nature">
        <title>Sequence and analysis of chromosome 1 of the plant Arabidopsis thaliana.</title>
        <authorList>
            <person name="Theologis A."/>
            <person name="Ecker J.R."/>
            <person name="Palm C.J."/>
            <person name="Federspiel N.A."/>
            <person name="Kaul S."/>
            <person name="White O."/>
            <person name="Alonso J."/>
            <person name="Altafi H."/>
            <person name="Araujo R."/>
            <person name="Bowman C.L."/>
            <person name="Brooks S.Y."/>
            <person name="Buehler E."/>
            <person name="Chan A."/>
            <person name="Chao Q."/>
            <person name="Chen H."/>
            <person name="Cheuk R.F."/>
            <person name="Chin C.W."/>
            <person name="Chung M.K."/>
            <person name="Conn L."/>
            <person name="Conway A.B."/>
            <person name="Conway A.R."/>
            <person name="Creasy T.H."/>
            <person name="Dewar K."/>
            <person name="Dunn P."/>
            <person name="Etgu P."/>
            <person name="Feldblyum T.V."/>
            <person name="Feng J.-D."/>
            <person name="Fong B."/>
            <person name="Fujii C.Y."/>
            <person name="Gill J.E."/>
            <person name="Goldsmith A.D."/>
            <person name="Haas B."/>
            <person name="Hansen N.F."/>
            <person name="Hughes B."/>
            <person name="Huizar L."/>
            <person name="Hunter J.L."/>
            <person name="Jenkins J."/>
            <person name="Johnson-Hopson C."/>
            <person name="Khan S."/>
            <person name="Khaykin E."/>
            <person name="Kim C.J."/>
            <person name="Koo H.L."/>
            <person name="Kremenetskaia I."/>
            <person name="Kurtz D.B."/>
            <person name="Kwan A."/>
            <person name="Lam B."/>
            <person name="Langin-Hooper S."/>
            <person name="Lee A."/>
            <person name="Lee J.M."/>
            <person name="Lenz C.A."/>
            <person name="Li J.H."/>
            <person name="Li Y.-P."/>
            <person name="Lin X."/>
            <person name="Liu S.X."/>
            <person name="Liu Z.A."/>
            <person name="Luros J.S."/>
            <person name="Maiti R."/>
            <person name="Marziali A."/>
            <person name="Militscher J."/>
            <person name="Miranda M."/>
            <person name="Nguyen M."/>
            <person name="Nierman W.C."/>
            <person name="Osborne B.I."/>
            <person name="Pai G."/>
            <person name="Peterson J."/>
            <person name="Pham P.K."/>
            <person name="Rizzo M."/>
            <person name="Rooney T."/>
            <person name="Rowley D."/>
            <person name="Sakano H."/>
            <person name="Salzberg S.L."/>
            <person name="Schwartz J.R."/>
            <person name="Shinn P."/>
            <person name="Southwick A.M."/>
            <person name="Sun H."/>
            <person name="Tallon L.J."/>
            <person name="Tambunga G."/>
            <person name="Toriumi M.J."/>
            <person name="Town C.D."/>
            <person name="Utterback T."/>
            <person name="Van Aken S."/>
            <person name="Vaysberg M."/>
            <person name="Vysotskaia V.S."/>
            <person name="Walker M."/>
            <person name="Wu D."/>
            <person name="Yu G."/>
            <person name="Fraser C.M."/>
            <person name="Venter J.C."/>
            <person name="Davis R.W."/>
        </authorList>
    </citation>
    <scope>NUCLEOTIDE SEQUENCE [LARGE SCALE GENOMIC DNA]</scope>
    <source>
        <strain>cv. Columbia</strain>
    </source>
</reference>
<reference key="2">
    <citation type="journal article" date="2017" name="Plant J.">
        <title>Araport11: a complete reannotation of the Arabidopsis thaliana reference genome.</title>
        <authorList>
            <person name="Cheng C.Y."/>
            <person name="Krishnakumar V."/>
            <person name="Chan A.P."/>
            <person name="Thibaud-Nissen F."/>
            <person name="Schobel S."/>
            <person name="Town C.D."/>
        </authorList>
    </citation>
    <scope>GENOME REANNOTATION</scope>
    <source>
        <strain>cv. Columbia</strain>
    </source>
</reference>
<reference key="3">
    <citation type="journal article" date="2003" name="Science">
        <title>Empirical analysis of transcriptional activity in the Arabidopsis genome.</title>
        <authorList>
            <person name="Yamada K."/>
            <person name="Lim J."/>
            <person name="Dale J.M."/>
            <person name="Chen H."/>
            <person name="Shinn P."/>
            <person name="Palm C.J."/>
            <person name="Southwick A.M."/>
            <person name="Wu H.C."/>
            <person name="Kim C.J."/>
            <person name="Nguyen M."/>
            <person name="Pham P.K."/>
            <person name="Cheuk R.F."/>
            <person name="Karlin-Newmann G."/>
            <person name="Liu S.X."/>
            <person name="Lam B."/>
            <person name="Sakano H."/>
            <person name="Wu T."/>
            <person name="Yu G."/>
            <person name="Miranda M."/>
            <person name="Quach H.L."/>
            <person name="Tripp M."/>
            <person name="Chang C.H."/>
            <person name="Lee J.M."/>
            <person name="Toriumi M.J."/>
            <person name="Chan M.M."/>
            <person name="Tang C.C."/>
            <person name="Onodera C.S."/>
            <person name="Deng J.M."/>
            <person name="Akiyama K."/>
            <person name="Ansari Y."/>
            <person name="Arakawa T."/>
            <person name="Banh J."/>
            <person name="Banno F."/>
            <person name="Bowser L."/>
            <person name="Brooks S.Y."/>
            <person name="Carninci P."/>
            <person name="Chao Q."/>
            <person name="Choy N."/>
            <person name="Enju A."/>
            <person name="Goldsmith A.D."/>
            <person name="Gurjal M."/>
            <person name="Hansen N.F."/>
            <person name="Hayashizaki Y."/>
            <person name="Johnson-Hopson C."/>
            <person name="Hsuan V.W."/>
            <person name="Iida K."/>
            <person name="Karnes M."/>
            <person name="Khan S."/>
            <person name="Koesema E."/>
            <person name="Ishida J."/>
            <person name="Jiang P.X."/>
            <person name="Jones T."/>
            <person name="Kawai J."/>
            <person name="Kamiya A."/>
            <person name="Meyers C."/>
            <person name="Nakajima M."/>
            <person name="Narusaka M."/>
            <person name="Seki M."/>
            <person name="Sakurai T."/>
            <person name="Satou M."/>
            <person name="Tamse R."/>
            <person name="Vaysberg M."/>
            <person name="Wallender E.K."/>
            <person name="Wong C."/>
            <person name="Yamamura Y."/>
            <person name="Yuan S."/>
            <person name="Shinozaki K."/>
            <person name="Davis R.W."/>
            <person name="Theologis A."/>
            <person name="Ecker J.R."/>
        </authorList>
    </citation>
    <scope>NUCLEOTIDE SEQUENCE [LARGE SCALE MRNA]</scope>
    <source>
        <strain>cv. Columbia</strain>
    </source>
</reference>
<reference key="4">
    <citation type="submission" date="2006-07" db="EMBL/GenBank/DDBJ databases">
        <title>Large-scale analysis of RIKEN Arabidopsis full-length (RAFL) cDNAs.</title>
        <authorList>
            <person name="Totoki Y."/>
            <person name="Seki M."/>
            <person name="Ishida J."/>
            <person name="Nakajima M."/>
            <person name="Enju A."/>
            <person name="Kamiya A."/>
            <person name="Narusaka M."/>
            <person name="Shin-i T."/>
            <person name="Nakagawa M."/>
            <person name="Sakamoto N."/>
            <person name="Oishi K."/>
            <person name="Kohara Y."/>
            <person name="Kobayashi M."/>
            <person name="Toyoda A."/>
            <person name="Sakaki Y."/>
            <person name="Sakurai T."/>
            <person name="Iida K."/>
            <person name="Akiyama K."/>
            <person name="Satou M."/>
            <person name="Toyoda T."/>
            <person name="Konagaya A."/>
            <person name="Carninci P."/>
            <person name="Kawai J."/>
            <person name="Hayashizaki Y."/>
            <person name="Shinozaki K."/>
        </authorList>
    </citation>
    <scope>NUCLEOTIDE SEQUENCE [LARGE SCALE MRNA]</scope>
    <source>
        <strain>cv. Columbia</strain>
    </source>
</reference>
<reference key="5">
    <citation type="journal article" date="2006" name="BMC Genomics">
        <title>The maize INDETERMINATE1 flowering time regulator defines a highly conserved zinc finger protein family in higher plants.</title>
        <authorList>
            <person name="Colasanti J."/>
            <person name="Tremblay R."/>
            <person name="Wong A.Y."/>
            <person name="Coneva V."/>
            <person name="Kozaki A."/>
            <person name="Mable B.K."/>
        </authorList>
    </citation>
    <scope>GENE FAMILY</scope>
    <scope>NOMENCLATURE</scope>
</reference>
<feature type="chain" id="PRO_0000431543" description="Protein indeterminate-domain 7">
    <location>
        <begin position="1"/>
        <end position="455"/>
    </location>
</feature>
<feature type="zinc finger region" description="C2H2-type 1" evidence="3">
    <location>
        <begin position="92"/>
        <end position="114"/>
    </location>
</feature>
<feature type="zinc finger region" description="C2H2-type 2" evidence="7">
    <location>
        <begin position="134"/>
        <end position="164"/>
    </location>
</feature>
<feature type="zinc finger region" description="C2H2-type 2; degenerate" evidence="3">
    <location>
        <begin position="169"/>
        <end position="192"/>
    </location>
</feature>
<feature type="zinc finger region" description="CCHC-type 2; atypical" evidence="7">
    <location>
        <begin position="196"/>
        <end position="219"/>
    </location>
</feature>
<feature type="region of interest" description="Disordered" evidence="5">
    <location>
        <begin position="1"/>
        <end position="52"/>
    </location>
</feature>
<feature type="region of interest" description="SHR-binding" evidence="1">
    <location>
        <begin position="206"/>
        <end position="218"/>
    </location>
</feature>
<feature type="region of interest" description="Disordered" evidence="5">
    <location>
        <begin position="235"/>
        <end position="351"/>
    </location>
</feature>
<feature type="short sequence motif" description="Nuclear localization signal" evidence="4">
    <location>
        <begin position="156"/>
        <end position="163"/>
    </location>
</feature>
<feature type="compositionally biased region" description="Polar residues" evidence="5">
    <location>
        <begin position="17"/>
        <end position="49"/>
    </location>
</feature>
<feature type="compositionally biased region" description="Low complexity" evidence="5">
    <location>
        <begin position="248"/>
        <end position="265"/>
    </location>
</feature>
<feature type="compositionally biased region" description="Low complexity" evidence="5">
    <location>
        <begin position="288"/>
        <end position="299"/>
    </location>
</feature>
<feature type="binding site" evidence="1">
    <location>
        <position position="171"/>
    </location>
    <ligand>
        <name>Zn(2+)</name>
        <dbReference type="ChEBI" id="CHEBI:29105"/>
        <label>1</label>
    </ligand>
</feature>
<feature type="binding site" evidence="1">
    <location>
        <position position="174"/>
    </location>
    <ligand>
        <name>Zn(2+)</name>
        <dbReference type="ChEBI" id="CHEBI:29105"/>
        <label>1</label>
    </ligand>
</feature>
<feature type="binding site" evidence="1">
    <location>
        <position position="187"/>
    </location>
    <ligand>
        <name>Zn(2+)</name>
        <dbReference type="ChEBI" id="CHEBI:29105"/>
        <label>1</label>
    </ligand>
</feature>
<feature type="binding site" evidence="1">
    <location>
        <position position="191"/>
    </location>
    <ligand>
        <name>Zn(2+)</name>
        <dbReference type="ChEBI" id="CHEBI:29105"/>
        <label>1</label>
    </ligand>
</feature>
<feature type="binding site" evidence="1">
    <location>
        <position position="198"/>
    </location>
    <ligand>
        <name>Zn(2+)</name>
        <dbReference type="ChEBI" id="CHEBI:29105"/>
        <label>2</label>
    </ligand>
</feature>
<feature type="binding site" evidence="1">
    <location>
        <position position="200"/>
    </location>
    <ligand>
        <name>Zn(2+)</name>
        <dbReference type="ChEBI" id="CHEBI:29105"/>
        <label>2</label>
    </ligand>
</feature>
<feature type="binding site" evidence="1">
    <location>
        <position position="213"/>
    </location>
    <ligand>
        <name>Zn(2+)</name>
        <dbReference type="ChEBI" id="CHEBI:29105"/>
        <label>2</label>
    </ligand>
</feature>
<feature type="binding site" evidence="1">
    <location>
        <position position="217"/>
    </location>
    <ligand>
        <name>Zn(2+)</name>
        <dbReference type="ChEBI" id="CHEBI:29105"/>
        <label>2</label>
    </ligand>
</feature>
<feature type="modified residue" description="Phosphoserine" evidence="2">
    <location>
        <position position="82"/>
    </location>
</feature>
<feature type="sequence conflict" description="In Ref. 3; AAM14021." evidence="7" ref="3">
    <original>E</original>
    <variation>A</variation>
    <location>
        <position position="445"/>
    </location>
</feature>
<proteinExistence type="evidence at transcript level"/>
<evidence type="ECO:0000250" key="1">
    <source>
        <dbReference type="UniProtKB" id="Q700D2"/>
    </source>
</evidence>
<evidence type="ECO:0000250" key="2">
    <source>
        <dbReference type="UniProtKB" id="Q8GYC1"/>
    </source>
</evidence>
<evidence type="ECO:0000255" key="3">
    <source>
        <dbReference type="PROSITE-ProRule" id="PRU00042"/>
    </source>
</evidence>
<evidence type="ECO:0000255" key="4">
    <source>
        <dbReference type="PROSITE-ProRule" id="PRU00768"/>
    </source>
</evidence>
<evidence type="ECO:0000256" key="5">
    <source>
        <dbReference type="SAM" id="MobiDB-lite"/>
    </source>
</evidence>
<evidence type="ECO:0000303" key="6">
    <source>
    </source>
</evidence>
<evidence type="ECO:0000305" key="7"/>
<evidence type="ECO:0000312" key="8">
    <source>
        <dbReference type="Araport" id="AT1G55110"/>
    </source>
</evidence>
<evidence type="ECO:0000312" key="9">
    <source>
        <dbReference type="EMBL" id="AAG50836.1"/>
    </source>
</evidence>
<accession>Q8H1F5</accession>
<accession>Q8RX03</accession>
<accession>Q9C722</accession>
<dbReference type="EMBL" id="AC073944">
    <property type="protein sequence ID" value="AAG50836.1"/>
    <property type="status" value="ALT_INIT"/>
    <property type="molecule type" value="Genomic_DNA"/>
</dbReference>
<dbReference type="EMBL" id="CP002684">
    <property type="protein sequence ID" value="AEE33185.1"/>
    <property type="molecule type" value="Genomic_DNA"/>
</dbReference>
<dbReference type="EMBL" id="CP002684">
    <property type="protein sequence ID" value="ANM60332.1"/>
    <property type="molecule type" value="Genomic_DNA"/>
</dbReference>
<dbReference type="EMBL" id="CP002684">
    <property type="protein sequence ID" value="ANM60333.1"/>
    <property type="molecule type" value="Genomic_DNA"/>
</dbReference>
<dbReference type="EMBL" id="AY150421">
    <property type="protein sequence ID" value="AAN12966.1"/>
    <property type="molecule type" value="mRNA"/>
</dbReference>
<dbReference type="EMBL" id="AY090998">
    <property type="protein sequence ID" value="AAM14021.1"/>
    <property type="molecule type" value="mRNA"/>
</dbReference>
<dbReference type="EMBL" id="AK227194">
    <property type="protein sequence ID" value="BAE99233.1"/>
    <property type="molecule type" value="mRNA"/>
</dbReference>
<dbReference type="PIR" id="F96592">
    <property type="entry name" value="F96592"/>
</dbReference>
<dbReference type="RefSeq" id="NP_001322628.1">
    <property type="nucleotide sequence ID" value="NM_001333688.1"/>
</dbReference>
<dbReference type="RefSeq" id="NP_001322629.1">
    <property type="nucleotide sequence ID" value="NM_001333689.1"/>
</dbReference>
<dbReference type="RefSeq" id="NP_175907.2">
    <property type="nucleotide sequence ID" value="NM_104384.4"/>
</dbReference>
<dbReference type="FunCoup" id="Q8H1F5">
    <property type="interactions" value="70"/>
</dbReference>
<dbReference type="STRING" id="3702.Q8H1F5"/>
<dbReference type="iPTMnet" id="Q8H1F5"/>
<dbReference type="PaxDb" id="3702-AT1G55110.1"/>
<dbReference type="ProteomicsDB" id="228788"/>
<dbReference type="EnsemblPlants" id="AT1G55110.1">
    <property type="protein sequence ID" value="AT1G55110.1"/>
    <property type="gene ID" value="AT1G55110"/>
</dbReference>
<dbReference type="EnsemblPlants" id="AT1G55110.2">
    <property type="protein sequence ID" value="AT1G55110.2"/>
    <property type="gene ID" value="AT1G55110"/>
</dbReference>
<dbReference type="EnsemblPlants" id="AT1G55110.3">
    <property type="protein sequence ID" value="AT1G55110.3"/>
    <property type="gene ID" value="AT1G55110"/>
</dbReference>
<dbReference type="GeneID" id="841954"/>
<dbReference type="Gramene" id="AT1G55110.1">
    <property type="protein sequence ID" value="AT1G55110.1"/>
    <property type="gene ID" value="AT1G55110"/>
</dbReference>
<dbReference type="Gramene" id="AT1G55110.2">
    <property type="protein sequence ID" value="AT1G55110.2"/>
    <property type="gene ID" value="AT1G55110"/>
</dbReference>
<dbReference type="Gramene" id="AT1G55110.3">
    <property type="protein sequence ID" value="AT1G55110.3"/>
    <property type="gene ID" value="AT1G55110"/>
</dbReference>
<dbReference type="KEGG" id="ath:AT1G55110"/>
<dbReference type="Araport" id="AT1G55110"/>
<dbReference type="TAIR" id="AT1G55110">
    <property type="gene designation" value="IDD7"/>
</dbReference>
<dbReference type="eggNOG" id="KOG1721">
    <property type="taxonomic scope" value="Eukaryota"/>
</dbReference>
<dbReference type="HOGENOM" id="CLU_014578_4_2_1"/>
<dbReference type="InParanoid" id="Q8H1F5"/>
<dbReference type="OMA" id="QEQCFVP"/>
<dbReference type="PhylomeDB" id="Q8H1F5"/>
<dbReference type="PRO" id="PR:Q8H1F5"/>
<dbReference type="Proteomes" id="UP000006548">
    <property type="component" value="Chromosome 1"/>
</dbReference>
<dbReference type="ExpressionAtlas" id="Q8H1F5">
    <property type="expression patterns" value="baseline and differential"/>
</dbReference>
<dbReference type="GO" id="GO:0005634">
    <property type="term" value="C:nucleus"/>
    <property type="evidence" value="ECO:0007669"/>
    <property type="project" value="UniProtKB-SubCell"/>
</dbReference>
<dbReference type="GO" id="GO:0003677">
    <property type="term" value="F:DNA binding"/>
    <property type="evidence" value="ECO:0007669"/>
    <property type="project" value="UniProtKB-KW"/>
</dbReference>
<dbReference type="GO" id="GO:0003700">
    <property type="term" value="F:DNA-binding transcription factor activity"/>
    <property type="evidence" value="ECO:0000250"/>
    <property type="project" value="TAIR"/>
</dbReference>
<dbReference type="GO" id="GO:0008270">
    <property type="term" value="F:zinc ion binding"/>
    <property type="evidence" value="ECO:0007669"/>
    <property type="project" value="UniProtKB-KW"/>
</dbReference>
<dbReference type="GO" id="GO:0006355">
    <property type="term" value="P:regulation of DNA-templated transcription"/>
    <property type="evidence" value="ECO:0000304"/>
    <property type="project" value="TAIR"/>
</dbReference>
<dbReference type="FunFam" id="3.30.160.60:FF:000554">
    <property type="entry name" value="protein indeterminate-domain 12-like"/>
    <property type="match status" value="1"/>
</dbReference>
<dbReference type="FunFam" id="3.30.160.60:FF:000131">
    <property type="entry name" value="protein indeterminate-domain 5, chloroplastic-like"/>
    <property type="match status" value="1"/>
</dbReference>
<dbReference type="Gene3D" id="3.30.160.60">
    <property type="entry name" value="Classic Zinc Finger"/>
    <property type="match status" value="2"/>
</dbReference>
<dbReference type="InterPro" id="IPR055187">
    <property type="entry name" value="C2CH-3rd_BIRD-IDD"/>
</dbReference>
<dbReference type="InterPro" id="IPR055185">
    <property type="entry name" value="C2CH-4th_BIRD-IDD"/>
</dbReference>
<dbReference type="InterPro" id="IPR055186">
    <property type="entry name" value="C2H2-2nd_BIRD-IDD"/>
</dbReference>
<dbReference type="InterPro" id="IPR031140">
    <property type="entry name" value="IDD1-16"/>
</dbReference>
<dbReference type="InterPro" id="IPR036236">
    <property type="entry name" value="Znf_C2H2_sf"/>
</dbReference>
<dbReference type="InterPro" id="IPR013087">
    <property type="entry name" value="Znf_C2H2_type"/>
</dbReference>
<dbReference type="PANTHER" id="PTHR10593:SF250">
    <property type="entry name" value="PROTEIN INDETERMINATE-DOMAIN 7"/>
    <property type="match status" value="1"/>
</dbReference>
<dbReference type="PANTHER" id="PTHR10593">
    <property type="entry name" value="SERINE/THREONINE-PROTEIN KINASE RIO"/>
    <property type="match status" value="1"/>
</dbReference>
<dbReference type="Pfam" id="PF22995">
    <property type="entry name" value="C2CH-3rd_BIRD-IDD"/>
    <property type="match status" value="1"/>
</dbReference>
<dbReference type="Pfam" id="PF22992">
    <property type="entry name" value="C2CH-4th_BIRD-IDD"/>
    <property type="match status" value="1"/>
</dbReference>
<dbReference type="Pfam" id="PF22996">
    <property type="entry name" value="C2H2-2nd_BIRD-IDD"/>
    <property type="match status" value="1"/>
</dbReference>
<dbReference type="Pfam" id="PF12874">
    <property type="entry name" value="zf-met"/>
    <property type="match status" value="1"/>
</dbReference>
<dbReference type="SMART" id="SM00355">
    <property type="entry name" value="ZnF_C2H2"/>
    <property type="match status" value="3"/>
</dbReference>
<dbReference type="SUPFAM" id="SSF57667">
    <property type="entry name" value="beta-beta-alpha zinc fingers"/>
    <property type="match status" value="1"/>
</dbReference>
<dbReference type="PROSITE" id="PS00028">
    <property type="entry name" value="ZINC_FINGER_C2H2_1"/>
    <property type="match status" value="1"/>
</dbReference>
<dbReference type="PROSITE" id="PS50157">
    <property type="entry name" value="ZINC_FINGER_C2H2_2"/>
    <property type="match status" value="1"/>
</dbReference>
<sequence>MMMNRDILFHQQQQQQMEENMSNLTSASGDQASVSSGNRTETSGSNINQHHQEQCFVPQSSLKRKRNQPGNPDPEAEVMALSPKTLMATNRFICEVCNKGFQRDQNLQLHKRGHNLPWKLKQRSNKDVVRKKVYVCPEPGCVHHHPSRALGDLTGIKKHFFRKHGEKKWKCEKCSKKYAVQSDWKAHAKTCGTKEYKCDCGTLFSRRDSFITHRAFCDALAEESARAMPNPIMIQASNSPHHHHHQTQQNIGFSSSSQNIISNSNLHGPMKQEESQHHYQNIPPWLISSNPNPNGNNGNLFPPVASSVNTGRSSFPHPSPAMSATALLQKAAQMGSTKSTTPEEEERSSRSSYNNLITTTMAAMMTSPPEPGFGFQDYYMMNHQHHGGGEAFNGGFVPGEEKNDVVDDGGGETRDFLGLRSLMSHNEILSFANNLGNCLNTSATEQQQQQHSHQD</sequence>